<protein>
    <recommendedName>
        <fullName evidence="14">Probable glutamate carboxypeptidase AMP1</fullName>
        <ecNumber evidence="14">3.4.17.21</ecNumber>
    </recommendedName>
    <alternativeName>
        <fullName evidence="14">Probable glutamate carboxypeptidase 2</fullName>
    </alternativeName>
    <alternativeName>
        <fullName evidence="14">Probable glutamate carboxypeptidase II</fullName>
    </alternativeName>
    <alternativeName>
        <fullName evidence="12">Protein ALTERED MERISTEM PROGRAM 1</fullName>
        <shortName evidence="13">AtAMP1</shortName>
    </alternativeName>
    <alternativeName>
        <fullName>Protein CONSTITUTIVE MORPHOGENESIS 2</fullName>
    </alternativeName>
    <alternativeName>
        <fullName evidence="14">Protein HAUPTLING</fullName>
    </alternativeName>
    <alternativeName>
        <fullName evidence="14">Protein MULTIFOLIA</fullName>
    </alternativeName>
    <alternativeName>
        <fullName>Protein PRIMORDIA TIMING</fullName>
    </alternativeName>
</protein>
<sequence>MSQPLTTRPTVTGISIIPFRQPPPLCSFLFVIVLFVATFYTLHHPDAVTPPLLFSRNAYNALRLRRLFLSSASNATISSYLRELTRHPHLAGTKPSLDTLHYVFNHFQSLGLETHVAEYEALLSYPTHISVTASFSNTTTLEFDLNDVPGDSPVVRPYHAYSPSGSAQGNVVFVNHGEERDYHALESIGVSVKGCVVLARKGENLGRGAIVKIAEAKGALGVLIYAENDGGGFGGIERGTVMRGIGDPVSPGWPGVVGGEKLSLDDELVTRRFPKIPSLPLSLRNAEIILASLGGARAPLEWRNSGRVGPGQRVGPGRMVINMTFQGEMKMKKINNVVVTIRGSEEADRYVILGNHRDAWTYGAVDPNSGTSALLDISRRFALLLKSGWRPRRTILLCSWDAEEFGMIGSTEWIEENVLNLGASAVAYLNVDCAVQGSGFFAGATPQLDGLLVDVLKLVQDPDAVGLTVEETFKSQNNIIQRLSRVDSDFSGFLHHAGIPSIDMYYGADYPVYHTAFDSYDWMIHNADPLFHRHVAMAGIWGLLGILLADEPLIPFDYISYADQLQAHRDKLSKLLEGKVSVNPLSMAIQEFSLVAKEAADEAKKLKGKSYSKNDVAAAAKRRELNDRLMLVERGFLDAEGIKGKEWFKHLVYGPAAEPESKLGFFPGIADAIAMNASEGIIEHEIWRVARAIQRASKALKGGFT</sequence>
<name>GCP2_ARATH</name>
<comment type="function">
    <text evidence="4 5 6 7 8 9 10">May modulate the level of one or more small signaling molecules that have a role in regulating meristem function. May play a role in balancing and restricting the meristem-promoting activity of auxin signaling (PubMed:17553903). Involved in ethylene and giberellin (GA) signaling pathways or in a parallel pathway controlling cell and hypocotyl elongation and cellular organization (PubMed:17006669). Involved in abscisic acid (ABA) signaling pathway. Plays a negative role in ABA-mediated seed germination and seedling development (PubMed:23603279). Acts in association with LAMP1 to suppress ectopic stem cell niche formation in the shoot apical meristem (SAM) independently of cytokinin signaling pathway (PubMed:25673776). Modulates responses to ABA, oxidative stress and abotic stress (PubMed:23621575). Acts as a negative regulator of the ABA signaling pathway to modulate freezing and drought stress responses. Mediates carbon and amino acid metabolism (PubMed:23603279, PubMed:23621575). May be involved in the acquisition and/or maintenance of seed dormancy (PubMed:21637772). Involved in the regulation of response to heat shock and plant defense (PubMed:27743891).</text>
</comment>
<comment type="catalytic activity">
    <reaction evidence="14">
        <text>Release of an unsubstituted, C-terminal glutamyl residue, typically from Ac-Asp-Glu or folylpoly-gamma-glutamates.</text>
        <dbReference type="EC" id="3.4.17.21"/>
    </reaction>
</comment>
<comment type="cofactor">
    <cofactor evidence="1">
        <name>Zn(2+)</name>
        <dbReference type="ChEBI" id="CHEBI:29105"/>
    </cofactor>
    <text evidence="1">Binds 2 Zn(2+) ions per subunit.</text>
</comment>
<comment type="interaction">
    <interactant intactId="EBI-6912802">
        <id>Q9M1S8</id>
    </interactant>
    <interactant intactId="EBI-6912745">
        <id>O04379</id>
        <label>AGO1</label>
    </interactant>
    <organismsDiffer>false</organismsDiffer>
    <experiments>2</experiments>
</comment>
<comment type="subcellular location">
    <subcellularLocation>
        <location evidence="15">Endoplasmic reticulum membrane</location>
        <topology evidence="2">Single-pass type II membrane protein</topology>
    </subcellularLocation>
</comment>
<comment type="tissue specificity">
    <text evidence="3">Expressed in all plant parts. Highest levels in the bolt stem, inflorescence, root and silique. Low level in leaves.</text>
</comment>
<comment type="induction">
    <text evidence="7 8">Down-regulated by abscisic acid (ABA).</text>
</comment>
<comment type="similarity">
    <text evidence="14">Belongs to the peptidase M28 family. M28B subfamily.</text>
</comment>
<comment type="sequence caution" evidence="14">
    <conflict type="erroneous gene model prediction">
        <sequence resource="EMBL-CDS" id="CAB77592"/>
    </conflict>
</comment>
<organism>
    <name type="scientific">Arabidopsis thaliana</name>
    <name type="common">Mouse-ear cress</name>
    <dbReference type="NCBI Taxonomy" id="3702"/>
    <lineage>
        <taxon>Eukaryota</taxon>
        <taxon>Viridiplantae</taxon>
        <taxon>Streptophyta</taxon>
        <taxon>Embryophyta</taxon>
        <taxon>Tracheophyta</taxon>
        <taxon>Spermatophyta</taxon>
        <taxon>Magnoliopsida</taxon>
        <taxon>eudicotyledons</taxon>
        <taxon>Gunneridae</taxon>
        <taxon>Pentapetalae</taxon>
        <taxon>rosids</taxon>
        <taxon>malvids</taxon>
        <taxon>Brassicales</taxon>
        <taxon>Brassicaceae</taxon>
        <taxon>Camelineae</taxon>
        <taxon>Arabidopsis</taxon>
    </lineage>
</organism>
<accession>Q9M1S8</accession>
<accession>B5X581</accession>
<evidence type="ECO:0000250" key="1">
    <source>
        <dbReference type="UniProtKB" id="Q04609"/>
    </source>
</evidence>
<evidence type="ECO:0000255" key="2"/>
<evidence type="ECO:0000269" key="3">
    <source>
    </source>
</evidence>
<evidence type="ECO:0000269" key="4">
    <source>
    </source>
</evidence>
<evidence type="ECO:0000269" key="5">
    <source>
    </source>
</evidence>
<evidence type="ECO:0000269" key="6">
    <source>
    </source>
</evidence>
<evidence type="ECO:0000269" key="7">
    <source>
    </source>
</evidence>
<evidence type="ECO:0000269" key="8">
    <source>
    </source>
</evidence>
<evidence type="ECO:0000269" key="9">
    <source>
    </source>
</evidence>
<evidence type="ECO:0000269" key="10">
    <source>
    </source>
</evidence>
<evidence type="ECO:0000303" key="11">
    <source>
    </source>
</evidence>
<evidence type="ECO:0000303" key="12">
    <source>
    </source>
</evidence>
<evidence type="ECO:0000303" key="13">
    <source>
    </source>
</evidence>
<evidence type="ECO:0000305" key="14"/>
<evidence type="ECO:0000305" key="15">
    <source>
    </source>
</evidence>
<evidence type="ECO:0000312" key="16">
    <source>
        <dbReference type="Araport" id="AT3G54720"/>
    </source>
</evidence>
<evidence type="ECO:0000312" key="17">
    <source>
        <dbReference type="EMBL" id="CAB77592.1"/>
    </source>
</evidence>
<feature type="chain" id="PRO_0000174126" description="Probable glutamate carboxypeptidase AMP1">
    <location>
        <begin position="1"/>
        <end position="705"/>
    </location>
</feature>
<feature type="topological domain" description="Cytoplasmic" evidence="14">
    <location>
        <begin position="1"/>
        <end position="24"/>
    </location>
</feature>
<feature type="transmembrane region" description="Helical; Signal-anchor for type II membrane protein" evidence="2">
    <location>
        <begin position="25"/>
        <end position="42"/>
    </location>
</feature>
<feature type="topological domain" description="Extracellular" evidence="14">
    <location>
        <begin position="43"/>
        <end position="705"/>
    </location>
</feature>
<feature type="region of interest" description="Catalytic" evidence="14">
    <location>
        <begin position="255"/>
        <end position="548"/>
    </location>
</feature>
<feature type="active site" description="Nucleophile" evidence="1">
    <location>
        <position position="403"/>
    </location>
</feature>
<feature type="binding site" evidence="1">
    <location>
        <position position="356"/>
    </location>
    <ligand>
        <name>Zn(2+)</name>
        <dbReference type="ChEBI" id="CHEBI:29105"/>
        <label>1</label>
        <note>catalytic</note>
    </ligand>
</feature>
<feature type="binding site" evidence="1">
    <location>
        <position position="366"/>
    </location>
    <ligand>
        <name>Zn(2+)</name>
        <dbReference type="ChEBI" id="CHEBI:29105"/>
        <label>1</label>
        <note>catalytic</note>
    </ligand>
</feature>
<feature type="binding site" evidence="1">
    <location>
        <position position="366"/>
    </location>
    <ligand>
        <name>Zn(2+)</name>
        <dbReference type="ChEBI" id="CHEBI:29105"/>
        <label>2</label>
    </ligand>
</feature>
<feature type="binding site" evidence="1">
    <location>
        <position position="404"/>
    </location>
    <ligand>
        <name>Zn(2+)</name>
        <dbReference type="ChEBI" id="CHEBI:29105"/>
        <label>2</label>
    </ligand>
</feature>
<feature type="binding site" evidence="1">
    <location>
        <position position="432"/>
    </location>
    <ligand>
        <name>Zn(2+)</name>
        <dbReference type="ChEBI" id="CHEBI:29105"/>
        <label>1</label>
        <note>catalytic</note>
    </ligand>
</feature>
<feature type="binding site" evidence="1">
    <location>
        <position position="514"/>
    </location>
    <ligand>
        <name>Zn(2+)</name>
        <dbReference type="ChEBI" id="CHEBI:29105"/>
        <label>2</label>
    </ligand>
</feature>
<feature type="glycosylation site" description="N-linked (GlcNAc...) asparagine" evidence="2">
    <location>
        <position position="74"/>
    </location>
</feature>
<feature type="glycosylation site" description="N-linked (GlcNAc...) asparagine" evidence="2">
    <location>
        <position position="137"/>
    </location>
</feature>
<feature type="glycosylation site" description="N-linked (GlcNAc...) asparagine" evidence="2">
    <location>
        <position position="322"/>
    </location>
</feature>
<feature type="glycosylation site" description="N-linked (GlcNAc...) asparagine" evidence="2">
    <location>
        <position position="676"/>
    </location>
</feature>
<feature type="mutagenesis site" description="In PT; shows pleiotropic phenotypes, including altered shoot apical meristems, increased cell proliferation, polycotyly, constitutive photomorphogenesis, early flowering time, increased levels of endogenous cytokinin, and increased cyclin cycD3 expression." evidence="3">
    <original>E</original>
    <variation>K</variation>
    <location>
        <position position="404"/>
    </location>
</feature>
<feature type="mutagenesis site" description="In amp1-7; weak allele showing some pleiotropic phenotypes, including altered shoot apical meristem, increased cell proliferation, serrated leaves prior to full expansion, early flowering and increased levels of endogenous cytokinin." evidence="4">
    <original>G</original>
    <variation>E</variation>
    <location>
        <position position="545"/>
    </location>
</feature>
<feature type="sequence conflict" description="In Ref. 1; AAL03993." evidence="14" ref="1">
    <original>D</original>
    <variation>E</variation>
    <location>
        <position position="563"/>
    </location>
</feature>
<gene>
    <name evidence="11" type="primary">AMP1</name>
    <name evidence="14" type="synonym">COP2</name>
    <name evidence="14" type="synonym">HPT</name>
    <name evidence="14" type="synonym">MFO1</name>
    <name evidence="11" type="synonym">PT</name>
    <name evidence="16" type="ordered locus">At3g54720</name>
    <name evidence="17" type="ORF">T5N23_80</name>
</gene>
<reference key="1">
    <citation type="journal article" date="2001" name="Plant Cell">
        <title>The Arabidopsis AMP1 gene encodes a putative glutamate carboxypeptidase.</title>
        <authorList>
            <person name="Helliwell C.A."/>
            <person name="Chin-Atkins A.N."/>
            <person name="Wilson I.W."/>
            <person name="Chapple R."/>
            <person name="Dennis E.S."/>
            <person name="Chaudhury A."/>
        </authorList>
    </citation>
    <scope>NUCLEOTIDE SEQUENCE [MRNA]</scope>
    <scope>TISSUE SPECIFICITY</scope>
    <scope>MUTAGENESIS OF GLU-404</scope>
    <source>
        <strain>cv. Landsberg erecta</strain>
        <tissue>Silique</tissue>
    </source>
</reference>
<reference key="2">
    <citation type="journal article" date="2000" name="Nature">
        <title>Sequence and analysis of chromosome 3 of the plant Arabidopsis thaliana.</title>
        <authorList>
            <person name="Salanoubat M."/>
            <person name="Lemcke K."/>
            <person name="Rieger M."/>
            <person name="Ansorge W."/>
            <person name="Unseld M."/>
            <person name="Fartmann B."/>
            <person name="Valle G."/>
            <person name="Bloecker H."/>
            <person name="Perez-Alonso M."/>
            <person name="Obermaier B."/>
            <person name="Delseny M."/>
            <person name="Boutry M."/>
            <person name="Grivell L.A."/>
            <person name="Mache R."/>
            <person name="Puigdomenech P."/>
            <person name="De Simone V."/>
            <person name="Choisne N."/>
            <person name="Artiguenave F."/>
            <person name="Robert C."/>
            <person name="Brottier P."/>
            <person name="Wincker P."/>
            <person name="Cattolico L."/>
            <person name="Weissenbach J."/>
            <person name="Saurin W."/>
            <person name="Quetier F."/>
            <person name="Schaefer M."/>
            <person name="Mueller-Auer S."/>
            <person name="Gabel C."/>
            <person name="Fuchs M."/>
            <person name="Benes V."/>
            <person name="Wurmbach E."/>
            <person name="Drzonek H."/>
            <person name="Erfle H."/>
            <person name="Jordan N."/>
            <person name="Bangert S."/>
            <person name="Wiedelmann R."/>
            <person name="Kranz H."/>
            <person name="Voss H."/>
            <person name="Holland R."/>
            <person name="Brandt P."/>
            <person name="Nyakatura G."/>
            <person name="Vezzi A."/>
            <person name="D'Angelo M."/>
            <person name="Pallavicini A."/>
            <person name="Toppo S."/>
            <person name="Simionati B."/>
            <person name="Conrad A."/>
            <person name="Hornischer K."/>
            <person name="Kauer G."/>
            <person name="Loehnert T.-H."/>
            <person name="Nordsiek G."/>
            <person name="Reichelt J."/>
            <person name="Scharfe M."/>
            <person name="Schoen O."/>
            <person name="Bargues M."/>
            <person name="Terol J."/>
            <person name="Climent J."/>
            <person name="Navarro P."/>
            <person name="Collado C."/>
            <person name="Perez-Perez A."/>
            <person name="Ottenwaelder B."/>
            <person name="Duchemin D."/>
            <person name="Cooke R."/>
            <person name="Laudie M."/>
            <person name="Berger-Llauro C."/>
            <person name="Purnelle B."/>
            <person name="Masuy D."/>
            <person name="de Haan M."/>
            <person name="Maarse A.C."/>
            <person name="Alcaraz J.-P."/>
            <person name="Cottet A."/>
            <person name="Casacuberta E."/>
            <person name="Monfort A."/>
            <person name="Argiriou A."/>
            <person name="Flores M."/>
            <person name="Liguori R."/>
            <person name="Vitale D."/>
            <person name="Mannhaupt G."/>
            <person name="Haase D."/>
            <person name="Schoof H."/>
            <person name="Rudd S."/>
            <person name="Zaccaria P."/>
            <person name="Mewes H.-W."/>
            <person name="Mayer K.F.X."/>
            <person name="Kaul S."/>
            <person name="Town C.D."/>
            <person name="Koo H.L."/>
            <person name="Tallon L.J."/>
            <person name="Jenkins J."/>
            <person name="Rooney T."/>
            <person name="Rizzo M."/>
            <person name="Walts A."/>
            <person name="Utterback T."/>
            <person name="Fujii C.Y."/>
            <person name="Shea T.P."/>
            <person name="Creasy T.H."/>
            <person name="Haas B."/>
            <person name="Maiti R."/>
            <person name="Wu D."/>
            <person name="Peterson J."/>
            <person name="Van Aken S."/>
            <person name="Pai G."/>
            <person name="Militscher J."/>
            <person name="Sellers P."/>
            <person name="Gill J.E."/>
            <person name="Feldblyum T.V."/>
            <person name="Preuss D."/>
            <person name="Lin X."/>
            <person name="Nierman W.C."/>
            <person name="Salzberg S.L."/>
            <person name="White O."/>
            <person name="Venter J.C."/>
            <person name="Fraser C.M."/>
            <person name="Kaneko T."/>
            <person name="Nakamura Y."/>
            <person name="Sato S."/>
            <person name="Kato T."/>
            <person name="Asamizu E."/>
            <person name="Sasamoto S."/>
            <person name="Kimura T."/>
            <person name="Idesawa K."/>
            <person name="Kawashima K."/>
            <person name="Kishida Y."/>
            <person name="Kiyokawa C."/>
            <person name="Kohara M."/>
            <person name="Matsumoto M."/>
            <person name="Matsuno A."/>
            <person name="Muraki A."/>
            <person name="Nakayama S."/>
            <person name="Nakazaki N."/>
            <person name="Shinpo S."/>
            <person name="Takeuchi C."/>
            <person name="Wada T."/>
            <person name="Watanabe A."/>
            <person name="Yamada M."/>
            <person name="Yasuda M."/>
            <person name="Tabata S."/>
        </authorList>
    </citation>
    <scope>NUCLEOTIDE SEQUENCE [LARGE SCALE GENOMIC DNA]</scope>
    <source>
        <strain>cv. Columbia</strain>
    </source>
</reference>
<reference key="3">
    <citation type="journal article" date="2017" name="Plant J.">
        <title>Araport11: a complete reannotation of the Arabidopsis thaliana reference genome.</title>
        <authorList>
            <person name="Cheng C.Y."/>
            <person name="Krishnakumar V."/>
            <person name="Chan A.P."/>
            <person name="Thibaud-Nissen F."/>
            <person name="Schobel S."/>
            <person name="Town C.D."/>
        </authorList>
    </citation>
    <scope>GENOME REANNOTATION</scope>
    <source>
        <strain>cv. Columbia</strain>
    </source>
</reference>
<reference key="4">
    <citation type="submission" date="2008-10" db="EMBL/GenBank/DDBJ databases">
        <title>Arabidopsis ORF clones.</title>
        <authorList>
            <person name="De Los Reyes C."/>
            <person name="Quan R."/>
            <person name="Chen H."/>
            <person name="Bautista V.R."/>
            <person name="Kim C.J."/>
            <person name="Ecker J.R."/>
        </authorList>
    </citation>
    <scope>NUCLEOTIDE SEQUENCE [LARGE SCALE MRNA]</scope>
    <source>
        <strain>cv. Columbia</strain>
    </source>
</reference>
<reference key="5">
    <citation type="journal article" date="2007" name="Development">
        <title>AMP1 and MP antagonistically regulate embryo and meristem development in Arabidopsis.</title>
        <authorList>
            <person name="Vidaurre D.P."/>
            <person name="Ploense S."/>
            <person name="Krogan N.T."/>
            <person name="Berleth T."/>
        </authorList>
    </citation>
    <scope>FUNCTION</scope>
</reference>
<reference key="6">
    <citation type="journal article" date="2007" name="Planta">
        <title>A comparative analysis of the Arabidopsis mutant amp1-1 and a novel weak amp1 allele reveals new functions of the AMP1 protein.</title>
        <authorList>
            <person name="Saibo N.J."/>
            <person name="Vriezen W.H."/>
            <person name="De Grauwe L."/>
            <person name="Azmi A."/>
            <person name="Prinsen E."/>
            <person name="Van der Straeten D."/>
        </authorList>
    </citation>
    <scope>FUNCTION</scope>
    <scope>MUTAGENESIS OF GLY-545</scope>
</reference>
<reference key="7">
    <citation type="journal article" date="2011" name="PLoS ONE">
        <title>ALTERED MERISTEM PROGRAM 1 is involved in development of seed dormancy in Arabidopsis.</title>
        <authorList>
            <person name="Griffiths J."/>
            <person name="Barrero J.M."/>
            <person name="Taylor J."/>
            <person name="Helliwell C.A."/>
            <person name="Gubler F."/>
        </authorList>
    </citation>
    <scope>FUNCTION</scope>
</reference>
<reference key="8">
    <citation type="journal article" date="2013" name="New Phytol.">
        <title>The glutamate carboxypeptidase AMP1 mediates abscisic acid and abiotic stress responses in Arabidopsis.</title>
        <authorList>
            <person name="Shi Y."/>
            <person name="Wang Z."/>
            <person name="Meng P."/>
            <person name="Tian S."/>
            <person name="Zhang X."/>
            <person name="Yang S."/>
        </authorList>
    </citation>
    <scope>FUNCTION</scope>
    <scope>INDUCTION</scope>
</reference>
<reference key="9">
    <citation type="journal article" date="2013" name="Plant Physiol. Biochem.">
        <title>Arabidopsis ALTERED MERISTEM PROGRAM 1 negatively modulates plant responses to abscisic acid and dehydration stress.</title>
        <authorList>
            <person name="Shi H."/>
            <person name="Ye T."/>
            <person name="Wang Y."/>
            <person name="Chan Z."/>
        </authorList>
    </citation>
    <scope>FUNCTION</scope>
    <scope>INDUCTION</scope>
</reference>
<reference key="10">
    <citation type="journal article" date="2015" name="Plant Physiol.">
        <title>ALTERED MERISTEM PROGRAM1 suppresses ectopic stem cell niche formation in the shoot apical meristem in a largely cytokinin-independent manner.</title>
        <authorList>
            <person name="Huang W."/>
            <person name="Pitorre D."/>
            <person name="Poretska O."/>
            <person name="Marizzi C."/>
            <person name="Winter N."/>
            <person name="Poppenberger B."/>
            <person name="Sieberer T."/>
        </authorList>
    </citation>
    <scope>FUNCTION</scope>
    <scope>SUBCELLULAR LOCATION</scope>
</reference>
<reference key="11">
    <citation type="journal article" date="2016" name="Biochem. Biophys. Res. Commun.">
        <title>ALTERED MERISTEM PROGRAM1 has conflicting effects on the tolerance to heat shock and symptom development after Pseudomonas syringae infection.</title>
        <authorList>
            <person name="Lee M.W."/>
            <person name="Seo R."/>
            <person name="Lee Y.J."/>
            <person name="Bae J.H."/>
            <person name="Park J.K."/>
            <person name="Yoon J.H."/>
            <person name="Lee J.W."/>
            <person name="Jung H.W."/>
        </authorList>
    </citation>
    <scope>FUNCTION</scope>
</reference>
<proteinExistence type="evidence at protein level"/>
<keyword id="KW-0121">Carboxypeptidase</keyword>
<keyword id="KW-0256">Endoplasmic reticulum</keyword>
<keyword id="KW-0325">Glycoprotein</keyword>
<keyword id="KW-0378">Hydrolase</keyword>
<keyword id="KW-0472">Membrane</keyword>
<keyword id="KW-0479">Metal-binding</keyword>
<keyword id="KW-0482">Metalloprotease</keyword>
<keyword id="KW-0645">Protease</keyword>
<keyword id="KW-1185">Reference proteome</keyword>
<keyword id="KW-0735">Signal-anchor</keyword>
<keyword id="KW-0812">Transmembrane</keyword>
<keyword id="KW-1133">Transmembrane helix</keyword>
<keyword id="KW-0862">Zinc</keyword>
<dbReference type="EC" id="3.4.17.21" evidence="14"/>
<dbReference type="EMBL" id="AF357217">
    <property type="protein sequence ID" value="AAL03993.1"/>
    <property type="molecule type" value="mRNA"/>
</dbReference>
<dbReference type="EMBL" id="AL138650">
    <property type="protein sequence ID" value="CAB77592.1"/>
    <property type="status" value="ALT_SEQ"/>
    <property type="molecule type" value="Genomic_DNA"/>
</dbReference>
<dbReference type="EMBL" id="CP002686">
    <property type="protein sequence ID" value="AEE79270.1"/>
    <property type="molecule type" value="Genomic_DNA"/>
</dbReference>
<dbReference type="EMBL" id="BT046200">
    <property type="protein sequence ID" value="ACI49799.1"/>
    <property type="molecule type" value="mRNA"/>
</dbReference>
<dbReference type="PIR" id="T47631">
    <property type="entry name" value="T47631"/>
</dbReference>
<dbReference type="RefSeq" id="NP_567007.1">
    <property type="nucleotide sequence ID" value="NM_115329.3"/>
</dbReference>
<dbReference type="SMR" id="Q9M1S8"/>
<dbReference type="BioGRID" id="9953">
    <property type="interactions" value="1"/>
</dbReference>
<dbReference type="FunCoup" id="Q9M1S8">
    <property type="interactions" value="557"/>
</dbReference>
<dbReference type="IntAct" id="Q9M1S8">
    <property type="interactions" value="1"/>
</dbReference>
<dbReference type="STRING" id="3702.Q9M1S8"/>
<dbReference type="MEROPS" id="M28.007"/>
<dbReference type="GlyCosmos" id="Q9M1S8">
    <property type="glycosylation" value="4 sites, No reported glycans"/>
</dbReference>
<dbReference type="GlyGen" id="Q9M1S8">
    <property type="glycosylation" value="4 sites"/>
</dbReference>
<dbReference type="PaxDb" id="3702-AT3G54720.1"/>
<dbReference type="ProteomicsDB" id="222174"/>
<dbReference type="EnsemblPlants" id="AT3G54720.1">
    <property type="protein sequence ID" value="AT3G54720.1"/>
    <property type="gene ID" value="AT3G54720"/>
</dbReference>
<dbReference type="GeneID" id="824637"/>
<dbReference type="Gramene" id="AT3G54720.1">
    <property type="protein sequence ID" value="AT3G54720.1"/>
    <property type="gene ID" value="AT3G54720"/>
</dbReference>
<dbReference type="KEGG" id="ath:AT3G54720"/>
<dbReference type="Araport" id="AT3G54720"/>
<dbReference type="TAIR" id="AT3G54720">
    <property type="gene designation" value="AMP1"/>
</dbReference>
<dbReference type="eggNOG" id="KOG2195">
    <property type="taxonomic scope" value="Eukaryota"/>
</dbReference>
<dbReference type="HOGENOM" id="CLU_005688_2_1_1"/>
<dbReference type="InParanoid" id="Q9M1S8"/>
<dbReference type="OMA" id="YPRKDGR"/>
<dbReference type="BRENDA" id="3.4.17.21">
    <property type="organism ID" value="399"/>
</dbReference>
<dbReference type="PRO" id="PR:Q9M1S8"/>
<dbReference type="Proteomes" id="UP000006548">
    <property type="component" value="Chromosome 3"/>
</dbReference>
<dbReference type="ExpressionAtlas" id="Q9M1S8">
    <property type="expression patterns" value="baseline and differential"/>
</dbReference>
<dbReference type="GO" id="GO:0005789">
    <property type="term" value="C:endoplasmic reticulum membrane"/>
    <property type="evidence" value="ECO:0007669"/>
    <property type="project" value="UniProtKB-SubCell"/>
</dbReference>
<dbReference type="GO" id="GO:0016020">
    <property type="term" value="C:membrane"/>
    <property type="evidence" value="ECO:0000303"/>
    <property type="project" value="UniProtKB"/>
</dbReference>
<dbReference type="GO" id="GO:0046872">
    <property type="term" value="F:metal ion binding"/>
    <property type="evidence" value="ECO:0007669"/>
    <property type="project" value="UniProtKB-KW"/>
</dbReference>
<dbReference type="GO" id="GO:0004181">
    <property type="term" value="F:metallocarboxypeptidase activity"/>
    <property type="evidence" value="ECO:0000315"/>
    <property type="project" value="UniProtKB"/>
</dbReference>
<dbReference type="GO" id="GO:0009793">
    <property type="term" value="P:embryo development ending in seed dormancy"/>
    <property type="evidence" value="ECO:0000315"/>
    <property type="project" value="TAIR"/>
</dbReference>
<dbReference type="GO" id="GO:0009908">
    <property type="term" value="P:flower development"/>
    <property type="evidence" value="ECO:0000316"/>
    <property type="project" value="TAIR"/>
</dbReference>
<dbReference type="GO" id="GO:0010305">
    <property type="term" value="P:leaf vascular tissue pattern formation"/>
    <property type="evidence" value="ECO:0000316"/>
    <property type="project" value="TAIR"/>
</dbReference>
<dbReference type="GO" id="GO:0048507">
    <property type="term" value="P:meristem development"/>
    <property type="evidence" value="ECO:0000315"/>
    <property type="project" value="TAIR"/>
</dbReference>
<dbReference type="GO" id="GO:0009640">
    <property type="term" value="P:photomorphogenesis"/>
    <property type="evidence" value="ECO:0000315"/>
    <property type="project" value="TAIR"/>
</dbReference>
<dbReference type="GO" id="GO:0006508">
    <property type="term" value="P:proteolysis"/>
    <property type="evidence" value="ECO:0000315"/>
    <property type="project" value="UniProtKB"/>
</dbReference>
<dbReference type="GO" id="GO:0010080">
    <property type="term" value="P:regulation of floral meristem growth"/>
    <property type="evidence" value="ECO:0000315"/>
    <property type="project" value="UniProtKB"/>
</dbReference>
<dbReference type="GO" id="GO:0010081">
    <property type="term" value="P:regulation of inflorescence meristem growth"/>
    <property type="evidence" value="ECO:0000315"/>
    <property type="project" value="UniProtKB"/>
</dbReference>
<dbReference type="GO" id="GO:0010082">
    <property type="term" value="P:regulation of root meristem growth"/>
    <property type="evidence" value="ECO:0000315"/>
    <property type="project" value="UniProtKB"/>
</dbReference>
<dbReference type="GO" id="GO:0048364">
    <property type="term" value="P:root development"/>
    <property type="evidence" value="ECO:0000316"/>
    <property type="project" value="TAIR"/>
</dbReference>
<dbReference type="CDD" id="cd08022">
    <property type="entry name" value="M28_PSMA_like"/>
    <property type="match status" value="1"/>
</dbReference>
<dbReference type="FunFam" id="1.20.930.40:FF:000001">
    <property type="entry name" value="N-acetylated-alpha-linked acidic dipeptidase 2"/>
    <property type="match status" value="1"/>
</dbReference>
<dbReference type="FunFam" id="3.40.630.10:FF:000164">
    <property type="entry name" value="Os01g0740650 protein"/>
    <property type="match status" value="1"/>
</dbReference>
<dbReference type="Gene3D" id="3.50.30.30">
    <property type="match status" value="1"/>
</dbReference>
<dbReference type="Gene3D" id="1.20.930.40">
    <property type="entry name" value="Transferrin receptor-like, dimerisation domain"/>
    <property type="match status" value="1"/>
</dbReference>
<dbReference type="Gene3D" id="3.40.630.10">
    <property type="entry name" value="Zn peptidases"/>
    <property type="match status" value="1"/>
</dbReference>
<dbReference type="InterPro" id="IPR046450">
    <property type="entry name" value="PA_dom_sf"/>
</dbReference>
<dbReference type="InterPro" id="IPR007484">
    <property type="entry name" value="Peptidase_M28"/>
</dbReference>
<dbReference type="InterPro" id="IPR039373">
    <property type="entry name" value="Peptidase_M28B"/>
</dbReference>
<dbReference type="InterPro" id="IPR007365">
    <property type="entry name" value="TFR-like_dimer_dom"/>
</dbReference>
<dbReference type="InterPro" id="IPR036757">
    <property type="entry name" value="TFR-like_dimer_dom_sf"/>
</dbReference>
<dbReference type="PANTHER" id="PTHR10404:SF75">
    <property type="entry name" value="GLUTAMATE CARBOXYPEPTIDASE AMP1-RELATED"/>
    <property type="match status" value="1"/>
</dbReference>
<dbReference type="PANTHER" id="PTHR10404">
    <property type="entry name" value="N-ACETYLATED-ALPHA-LINKED ACIDIC DIPEPTIDASE"/>
    <property type="match status" value="1"/>
</dbReference>
<dbReference type="Pfam" id="PF04389">
    <property type="entry name" value="Peptidase_M28"/>
    <property type="match status" value="1"/>
</dbReference>
<dbReference type="Pfam" id="PF04253">
    <property type="entry name" value="TFR_dimer"/>
    <property type="match status" value="1"/>
</dbReference>
<dbReference type="SUPFAM" id="SSF52025">
    <property type="entry name" value="PA domain"/>
    <property type="match status" value="1"/>
</dbReference>
<dbReference type="SUPFAM" id="SSF47672">
    <property type="entry name" value="Transferrin receptor-like dimerisation domain"/>
    <property type="match status" value="1"/>
</dbReference>
<dbReference type="SUPFAM" id="SSF53187">
    <property type="entry name" value="Zn-dependent exopeptidases"/>
    <property type="match status" value="1"/>
</dbReference>